<feature type="chain" id="PRO_0000438706" description="Dual specificity protein phosphatase CDC14AB">
    <location>
        <begin position="1"/>
        <end position="611"/>
    </location>
</feature>
<feature type="domain" description="Tyrosine-protein phosphatase" evidence="3">
    <location>
        <begin position="194"/>
        <end position="352"/>
    </location>
</feature>
<feature type="region of interest" description="A">
    <location>
        <begin position="23"/>
        <end position="178"/>
    </location>
</feature>
<feature type="region of interest" description="Linker">
    <location>
        <begin position="179"/>
        <end position="192"/>
    </location>
</feature>
<feature type="region of interest" description="B">
    <location>
        <begin position="193"/>
        <end position="359"/>
    </location>
</feature>
<feature type="region of interest" description="Disordered" evidence="5">
    <location>
        <begin position="408"/>
        <end position="611"/>
    </location>
</feature>
<feature type="compositionally biased region" description="Low complexity" evidence="5">
    <location>
        <begin position="456"/>
        <end position="490"/>
    </location>
</feature>
<feature type="compositionally biased region" description="Polar residues" evidence="5">
    <location>
        <begin position="491"/>
        <end position="511"/>
    </location>
</feature>
<feature type="compositionally biased region" description="Low complexity" evidence="5">
    <location>
        <begin position="512"/>
        <end position="553"/>
    </location>
</feature>
<feature type="compositionally biased region" description="Polar residues" evidence="5">
    <location>
        <begin position="554"/>
        <end position="569"/>
    </location>
</feature>
<feature type="compositionally biased region" description="Polar residues" evidence="5">
    <location>
        <begin position="591"/>
        <end position="611"/>
    </location>
</feature>
<feature type="active site" description="Phosphocysteine intermediate" evidence="3">
    <location>
        <position position="294"/>
    </location>
</feature>
<reference key="1">
    <citation type="journal article" date="2013" name="Nature">
        <title>The zebrafish reference genome sequence and its relationship to the human genome.</title>
        <authorList>
            <person name="Howe K."/>
            <person name="Clark M.D."/>
            <person name="Torroja C.F."/>
            <person name="Torrance J."/>
            <person name="Berthelot C."/>
            <person name="Muffato M."/>
            <person name="Collins J.E."/>
            <person name="Humphray S."/>
            <person name="McLaren K."/>
            <person name="Matthews L."/>
            <person name="McLaren S."/>
            <person name="Sealy I."/>
            <person name="Caccamo M."/>
            <person name="Churcher C."/>
            <person name="Scott C."/>
            <person name="Barrett J.C."/>
            <person name="Koch R."/>
            <person name="Rauch G.J."/>
            <person name="White S."/>
            <person name="Chow W."/>
            <person name="Kilian B."/>
            <person name="Quintais L.T."/>
            <person name="Guerra-Assuncao J.A."/>
            <person name="Zhou Y."/>
            <person name="Gu Y."/>
            <person name="Yen J."/>
            <person name="Vogel J.H."/>
            <person name="Eyre T."/>
            <person name="Redmond S."/>
            <person name="Banerjee R."/>
            <person name="Chi J."/>
            <person name="Fu B."/>
            <person name="Langley E."/>
            <person name="Maguire S.F."/>
            <person name="Laird G.K."/>
            <person name="Lloyd D."/>
            <person name="Kenyon E."/>
            <person name="Donaldson S."/>
            <person name="Sehra H."/>
            <person name="Almeida-King J."/>
            <person name="Loveland J."/>
            <person name="Trevanion S."/>
            <person name="Jones M."/>
            <person name="Quail M."/>
            <person name="Willey D."/>
            <person name="Hunt A."/>
            <person name="Burton J."/>
            <person name="Sims S."/>
            <person name="McLay K."/>
            <person name="Plumb B."/>
            <person name="Davis J."/>
            <person name="Clee C."/>
            <person name="Oliver K."/>
            <person name="Clark R."/>
            <person name="Riddle C."/>
            <person name="Elliot D."/>
            <person name="Threadgold G."/>
            <person name="Harden G."/>
            <person name="Ware D."/>
            <person name="Begum S."/>
            <person name="Mortimore B."/>
            <person name="Kerry G."/>
            <person name="Heath P."/>
            <person name="Phillimore B."/>
            <person name="Tracey A."/>
            <person name="Corby N."/>
            <person name="Dunn M."/>
            <person name="Johnson C."/>
            <person name="Wood J."/>
            <person name="Clark S."/>
            <person name="Pelan S."/>
            <person name="Griffiths G."/>
            <person name="Smith M."/>
            <person name="Glithero R."/>
            <person name="Howden P."/>
            <person name="Barker N."/>
            <person name="Lloyd C."/>
            <person name="Stevens C."/>
            <person name="Harley J."/>
            <person name="Holt K."/>
            <person name="Panagiotidis G."/>
            <person name="Lovell J."/>
            <person name="Beasley H."/>
            <person name="Henderson C."/>
            <person name="Gordon D."/>
            <person name="Auger K."/>
            <person name="Wright D."/>
            <person name="Collins J."/>
            <person name="Raisen C."/>
            <person name="Dyer L."/>
            <person name="Leung K."/>
            <person name="Robertson L."/>
            <person name="Ambridge K."/>
            <person name="Leongamornlert D."/>
            <person name="McGuire S."/>
            <person name="Gilderthorp R."/>
            <person name="Griffiths C."/>
            <person name="Manthravadi D."/>
            <person name="Nichol S."/>
            <person name="Barker G."/>
            <person name="Whitehead S."/>
            <person name="Kay M."/>
            <person name="Brown J."/>
            <person name="Murnane C."/>
            <person name="Gray E."/>
            <person name="Humphries M."/>
            <person name="Sycamore N."/>
            <person name="Barker D."/>
            <person name="Saunders D."/>
            <person name="Wallis J."/>
            <person name="Babbage A."/>
            <person name="Hammond S."/>
            <person name="Mashreghi-Mohammadi M."/>
            <person name="Barr L."/>
            <person name="Martin S."/>
            <person name="Wray P."/>
            <person name="Ellington A."/>
            <person name="Matthews N."/>
            <person name="Ellwood M."/>
            <person name="Woodmansey R."/>
            <person name="Clark G."/>
            <person name="Cooper J."/>
            <person name="Tromans A."/>
            <person name="Grafham D."/>
            <person name="Skuce C."/>
            <person name="Pandian R."/>
            <person name="Andrews R."/>
            <person name="Harrison E."/>
            <person name="Kimberley A."/>
            <person name="Garnett J."/>
            <person name="Fosker N."/>
            <person name="Hall R."/>
            <person name="Garner P."/>
            <person name="Kelly D."/>
            <person name="Bird C."/>
            <person name="Palmer S."/>
            <person name="Gehring I."/>
            <person name="Berger A."/>
            <person name="Dooley C.M."/>
            <person name="Ersan-Urun Z."/>
            <person name="Eser C."/>
            <person name="Geiger H."/>
            <person name="Geisler M."/>
            <person name="Karotki L."/>
            <person name="Kirn A."/>
            <person name="Konantz J."/>
            <person name="Konantz M."/>
            <person name="Oberlander M."/>
            <person name="Rudolph-Geiger S."/>
            <person name="Teucke M."/>
            <person name="Lanz C."/>
            <person name="Raddatz G."/>
            <person name="Osoegawa K."/>
            <person name="Zhu B."/>
            <person name="Rapp A."/>
            <person name="Widaa S."/>
            <person name="Langford C."/>
            <person name="Yang F."/>
            <person name="Schuster S.C."/>
            <person name="Carter N.P."/>
            <person name="Harrow J."/>
            <person name="Ning Z."/>
            <person name="Herrero J."/>
            <person name="Searle S.M."/>
            <person name="Enright A."/>
            <person name="Geisler R."/>
            <person name="Plasterk R.H."/>
            <person name="Lee C."/>
            <person name="Westerfield M."/>
            <person name="de Jong P.J."/>
            <person name="Zon L.I."/>
            <person name="Postlethwait J.H."/>
            <person name="Nusslein-Volhard C."/>
            <person name="Hubbard T.J."/>
            <person name="Roest Crollius H."/>
            <person name="Rogers J."/>
            <person name="Stemple D.L."/>
        </authorList>
    </citation>
    <scope>NUCLEOTIDE SEQUENCE [LARGE SCALE GENOMIC DNA]</scope>
    <source>
        <strain>Tuebingen</strain>
    </source>
</reference>
<reference key="2">
    <citation type="journal article" date="2016" name="Am. J. Hum. Genet.">
        <title>Mutations in CDC14A, encoding a protein phosphatase involved in hair cell ciliogenesis, cause autosomal-recessive severe to profound deafness.</title>
        <authorList>
            <person name="Delmaghani S."/>
            <person name="Aghaie A."/>
            <person name="Bouyacoub Y."/>
            <person name="El Hachmi H."/>
            <person name="Bonnet C."/>
            <person name="Riahi Z."/>
            <person name="Chardenoux S."/>
            <person name="Perfettini I."/>
            <person name="Hardelin J.P."/>
            <person name="Houmeida A."/>
            <person name="Herbomel P."/>
            <person name="Petit C."/>
        </authorList>
    </citation>
    <scope>DISRUPTION PHENOTYPE</scope>
</reference>
<gene>
    <name type="primary">cdc14ab</name>
</gene>
<evidence type="ECO:0000250" key="1">
    <source>
        <dbReference type="UniProtKB" id="Q6GQT0"/>
    </source>
</evidence>
<evidence type="ECO:0000250" key="2">
    <source>
        <dbReference type="UniProtKB" id="Q9UNH5"/>
    </source>
</evidence>
<evidence type="ECO:0000255" key="3">
    <source>
        <dbReference type="PROSITE-ProRule" id="PRU00160"/>
    </source>
</evidence>
<evidence type="ECO:0000255" key="4">
    <source>
        <dbReference type="PROSITE-ProRule" id="PRU10044"/>
    </source>
</evidence>
<evidence type="ECO:0000256" key="5">
    <source>
        <dbReference type="SAM" id="MobiDB-lite"/>
    </source>
</evidence>
<evidence type="ECO:0000269" key="6">
    <source>
    </source>
</evidence>
<evidence type="ECO:0000305" key="7"/>
<protein>
    <recommendedName>
        <fullName>Dual specificity protein phosphatase CDC14AB</fullName>
        <ecNumber>3.1.3.16</ecNumber>
        <ecNumber>3.1.3.48</ecNumber>
    </recommendedName>
    <alternativeName>
        <fullName>CDC14 cell division cycle 14 homolog AB</fullName>
    </alternativeName>
</protein>
<keyword id="KW-0131">Cell cycle</keyword>
<keyword id="KW-0132">Cell division</keyword>
<keyword id="KW-0966">Cell projection</keyword>
<keyword id="KW-0963">Cytoplasm</keyword>
<keyword id="KW-0206">Cytoskeleton</keyword>
<keyword id="KW-0378">Hydrolase</keyword>
<keyword id="KW-0539">Nucleus</keyword>
<keyword id="KW-0597">Phosphoprotein</keyword>
<keyword id="KW-0904">Protein phosphatase</keyword>
<keyword id="KW-1185">Reference proteome</keyword>
<accession>A0A0R4IVA4</accession>
<proteinExistence type="inferred from homology"/>
<organism>
    <name type="scientific">Danio rerio</name>
    <name type="common">Zebrafish</name>
    <name type="synonym">Brachydanio rerio</name>
    <dbReference type="NCBI Taxonomy" id="7955"/>
    <lineage>
        <taxon>Eukaryota</taxon>
        <taxon>Metazoa</taxon>
        <taxon>Chordata</taxon>
        <taxon>Craniata</taxon>
        <taxon>Vertebrata</taxon>
        <taxon>Euteleostomi</taxon>
        <taxon>Actinopterygii</taxon>
        <taxon>Neopterygii</taxon>
        <taxon>Teleostei</taxon>
        <taxon>Ostariophysi</taxon>
        <taxon>Cypriniformes</taxon>
        <taxon>Danionidae</taxon>
        <taxon>Danioninae</taxon>
        <taxon>Danio</taxon>
    </lineage>
</organism>
<comment type="function">
    <text evidence="2">Dual-specificity phosphatase. Required for centrosome separation and productive cytokinesis during cell division. Dephosphorylates SIRT2 around early anaphase. May dephosphorylate the APC subunit FZR1/CDH1, thereby promoting APC-FZR1 dependent degradation of mitotic cyclins and subsequent exit from mitosis.</text>
</comment>
<comment type="catalytic activity">
    <reaction evidence="4">
        <text>O-phospho-L-tyrosyl-[protein] + H2O = L-tyrosyl-[protein] + phosphate</text>
        <dbReference type="Rhea" id="RHEA:10684"/>
        <dbReference type="Rhea" id="RHEA-COMP:10136"/>
        <dbReference type="Rhea" id="RHEA-COMP:20101"/>
        <dbReference type="ChEBI" id="CHEBI:15377"/>
        <dbReference type="ChEBI" id="CHEBI:43474"/>
        <dbReference type="ChEBI" id="CHEBI:46858"/>
        <dbReference type="ChEBI" id="CHEBI:61978"/>
        <dbReference type="EC" id="3.1.3.48"/>
    </reaction>
</comment>
<comment type="catalytic activity">
    <reaction evidence="2">
        <text>O-phospho-L-seryl-[protein] + H2O = L-seryl-[protein] + phosphate</text>
        <dbReference type="Rhea" id="RHEA:20629"/>
        <dbReference type="Rhea" id="RHEA-COMP:9863"/>
        <dbReference type="Rhea" id="RHEA-COMP:11604"/>
        <dbReference type="ChEBI" id="CHEBI:15377"/>
        <dbReference type="ChEBI" id="CHEBI:29999"/>
        <dbReference type="ChEBI" id="CHEBI:43474"/>
        <dbReference type="ChEBI" id="CHEBI:83421"/>
        <dbReference type="EC" id="3.1.3.16"/>
    </reaction>
</comment>
<comment type="catalytic activity">
    <reaction evidence="2">
        <text>O-phospho-L-threonyl-[protein] + H2O = L-threonyl-[protein] + phosphate</text>
        <dbReference type="Rhea" id="RHEA:47004"/>
        <dbReference type="Rhea" id="RHEA-COMP:11060"/>
        <dbReference type="Rhea" id="RHEA-COMP:11605"/>
        <dbReference type="ChEBI" id="CHEBI:15377"/>
        <dbReference type="ChEBI" id="CHEBI:30013"/>
        <dbReference type="ChEBI" id="CHEBI:43474"/>
        <dbReference type="ChEBI" id="CHEBI:61977"/>
        <dbReference type="EC" id="3.1.3.16"/>
    </reaction>
</comment>
<comment type="subcellular location">
    <subcellularLocation>
        <location evidence="2">Nucleus</location>
    </subcellularLocation>
    <subcellularLocation>
        <location evidence="2">Cytoplasm</location>
        <location evidence="2">Cytoskeleton</location>
        <location evidence="2">Microtubule organizing center</location>
        <location evidence="2">Centrosome</location>
    </subcellularLocation>
    <subcellularLocation>
        <location evidence="2">Cytoplasm</location>
        <location evidence="2">Cytoskeleton</location>
        <location evidence="2">Spindle pole</location>
    </subcellularLocation>
    <subcellularLocation>
        <location evidence="2">Cytoplasm</location>
        <location evidence="2">Cytoskeleton</location>
        <location evidence="2">Spindle</location>
    </subcellularLocation>
    <subcellularLocation>
        <location evidence="1">Cell projection</location>
        <location evidence="1">Kinocilium</location>
    </subcellularLocation>
    <text evidence="1 2">Centrosomal during interphase, released into the cytoplasm at the onset of mitosis. Subsequently localizes to the mitotic spindle pole and at the central spindle (By similarity). Present along both the transient kinocilia of developing cochlear hair cells and the persistent kinocilia of vestibular hair cells (By similarity).</text>
</comment>
<comment type="domain">
    <text evidence="2">Composed of two structurally equivalent A and B domains that adopt a dual specificity protein phosphatase (DSP) fold.</text>
</comment>
<comment type="disruption phenotype">
    <text evidence="6">Morpholino knockdown of the protein causes a shortening of the hair cell kinocilia in a larvae at 3 dpf. There are no other gross morphological defects in the inner ear.</text>
</comment>
<comment type="similarity">
    <text evidence="7">Belongs to the protein-tyrosine phosphatase family. Non-receptor class CDC14 subfamily.</text>
</comment>
<sequence length="611" mass="68117">MTLDNLKHSAILSTLFKMADDNDLLGASEFIKDRLYFATLRSKPKSTANTHYFSTDEEFVYENFYADFGPLNLAMLYRYCCKLNKKLKSFTLTRKRIVHYTSFDQRKRANAAVLIGAYAVIYLKKTPEEAYRALISGSNASYLPFRDASFGNCTYNLTVLDCLQGIRKALQHGFLNFETFDVNEYEHYERVENGDLNWITPGKLLAFSGPHPKSKVENGYPLHAPEAYFPYFRKHNVTTIVRLNKKIYDAKRFTDAGFDHYDLFFVDGSTPSDIITRRFLHICESTSGAVAVHCKAGLGRTGTLIGCYLMKHYRFTSAEAIAWIRICRPGSIIGPQQHYLEEKQASLWAHGDSLRSKQRQYQDRSVPQLISSMDNLSISTSIFKSHSLDRMEENDYAENDLGMTQGDKLRALKGRRQPRSATTGAIRVEDVKVHTRSPSQPLSRMKPPASSQGSISPLKSSKVPASSSSSSSSSSVSASAKRIGRSSSSSTNLKSTRLASSLGNLYEPNTESISSGKPPSPSSFTPHPVRTTYNYHYEVNNNNNQYSTTSSPSKSLGYNLNHSGPSGASANARLSAGEQGHQRNPPAGLSGLSTRHLSRSIPSLQSEYVQY</sequence>
<name>CC14A_DANRE</name>
<dbReference type="EC" id="3.1.3.16"/>
<dbReference type="EC" id="3.1.3.48"/>
<dbReference type="EMBL" id="BX908733">
    <property type="status" value="NOT_ANNOTATED_CDS"/>
    <property type="molecule type" value="Genomic_DNA"/>
</dbReference>
<dbReference type="EMBL" id="CR751228">
    <property type="status" value="NOT_ANNOTATED_CDS"/>
    <property type="molecule type" value="Genomic_DNA"/>
</dbReference>
<dbReference type="RefSeq" id="XP_005161772.1">
    <property type="nucleotide sequence ID" value="XM_005161715.5"/>
</dbReference>
<dbReference type="SMR" id="A0A0R4IVA4"/>
<dbReference type="FunCoup" id="A0A0R4IVA4">
    <property type="interactions" value="1092"/>
</dbReference>
<dbReference type="STRING" id="7955.ENSDARP00000096458"/>
<dbReference type="PaxDb" id="7955-ENSDARP00000096458"/>
<dbReference type="GeneID" id="565969"/>
<dbReference type="AGR" id="ZFIN:ZDB-GENE-070705-309"/>
<dbReference type="CTD" id="565969"/>
<dbReference type="ZFIN" id="ZDB-GENE-070705-309">
    <property type="gene designation" value="cdc14ab"/>
</dbReference>
<dbReference type="eggNOG" id="KOG1720">
    <property type="taxonomic scope" value="Eukaryota"/>
</dbReference>
<dbReference type="InParanoid" id="A0A0R4IVA4"/>
<dbReference type="OrthoDB" id="266663at2759"/>
<dbReference type="Reactome" id="R-DRE-176407">
    <property type="pathway name" value="Conversion from APC/C:Cdc20 to APC/C:Cdh1 in late anaphase"/>
</dbReference>
<dbReference type="Reactome" id="R-DRE-5687128">
    <property type="pathway name" value="MAPK6/MAPK4 signaling"/>
</dbReference>
<dbReference type="PRO" id="PR:A0A0R4IVA4"/>
<dbReference type="Proteomes" id="UP000000437">
    <property type="component" value="Chromosome 22"/>
</dbReference>
<dbReference type="GO" id="GO:0005813">
    <property type="term" value="C:centrosome"/>
    <property type="evidence" value="ECO:0007669"/>
    <property type="project" value="UniProtKB-SubCell"/>
</dbReference>
<dbReference type="GO" id="GO:0005737">
    <property type="term" value="C:cytoplasm"/>
    <property type="evidence" value="ECO:0000318"/>
    <property type="project" value="GO_Central"/>
</dbReference>
<dbReference type="GO" id="GO:0060091">
    <property type="term" value="C:kinocilium"/>
    <property type="evidence" value="ECO:0007669"/>
    <property type="project" value="UniProtKB-SubCell"/>
</dbReference>
<dbReference type="GO" id="GO:0072686">
    <property type="term" value="C:mitotic spindle"/>
    <property type="evidence" value="ECO:0000318"/>
    <property type="project" value="GO_Central"/>
</dbReference>
<dbReference type="GO" id="GO:0005730">
    <property type="term" value="C:nucleolus"/>
    <property type="evidence" value="ECO:0000318"/>
    <property type="project" value="GO_Central"/>
</dbReference>
<dbReference type="GO" id="GO:0000922">
    <property type="term" value="C:spindle pole"/>
    <property type="evidence" value="ECO:0000318"/>
    <property type="project" value="GO_Central"/>
</dbReference>
<dbReference type="GO" id="GO:0004722">
    <property type="term" value="F:protein serine/threonine phosphatase activity"/>
    <property type="evidence" value="ECO:0000318"/>
    <property type="project" value="GO_Central"/>
</dbReference>
<dbReference type="GO" id="GO:0004725">
    <property type="term" value="F:protein tyrosine phosphatase activity"/>
    <property type="evidence" value="ECO:0000318"/>
    <property type="project" value="GO_Central"/>
</dbReference>
<dbReference type="GO" id="GO:0051301">
    <property type="term" value="P:cell division"/>
    <property type="evidence" value="ECO:0007669"/>
    <property type="project" value="UniProtKB-KW"/>
</dbReference>
<dbReference type="GO" id="GO:0060271">
    <property type="term" value="P:cilium assembly"/>
    <property type="evidence" value="ECO:0000318"/>
    <property type="project" value="GO_Central"/>
</dbReference>
<dbReference type="GO" id="GO:0000226">
    <property type="term" value="P:microtubule cytoskeleton organization"/>
    <property type="evidence" value="ECO:0000318"/>
    <property type="project" value="GO_Central"/>
</dbReference>
<dbReference type="GO" id="GO:0032467">
    <property type="term" value="P:positive regulation of cytokinesis"/>
    <property type="evidence" value="ECO:0000318"/>
    <property type="project" value="GO_Central"/>
</dbReference>
<dbReference type="GO" id="GO:0007096">
    <property type="term" value="P:regulation of exit from mitosis"/>
    <property type="evidence" value="ECO:0000318"/>
    <property type="project" value="GO_Central"/>
</dbReference>
<dbReference type="CDD" id="cd14499">
    <property type="entry name" value="CDC14_C"/>
    <property type="match status" value="1"/>
</dbReference>
<dbReference type="CDD" id="cd17657">
    <property type="entry name" value="CDC14_N"/>
    <property type="match status" value="1"/>
</dbReference>
<dbReference type="FunFam" id="3.90.190.10:FF:000032">
    <property type="entry name" value="dual specificity protein phosphatase CDC14A isoform X1"/>
    <property type="match status" value="1"/>
</dbReference>
<dbReference type="FunFam" id="3.90.190.10:FF:000006">
    <property type="entry name" value="Dual specificity protein phosphatase CDC14B"/>
    <property type="match status" value="1"/>
</dbReference>
<dbReference type="Gene3D" id="3.90.190.10">
    <property type="entry name" value="Protein tyrosine phosphatase superfamily"/>
    <property type="match status" value="2"/>
</dbReference>
<dbReference type="InterPro" id="IPR044506">
    <property type="entry name" value="CDC14_C"/>
</dbReference>
<dbReference type="InterPro" id="IPR029260">
    <property type="entry name" value="DSPn"/>
</dbReference>
<dbReference type="InterPro" id="IPR000340">
    <property type="entry name" value="Dual-sp_phosphatase_cat-dom"/>
</dbReference>
<dbReference type="InterPro" id="IPR029021">
    <property type="entry name" value="Prot-tyrosine_phosphatase-like"/>
</dbReference>
<dbReference type="InterPro" id="IPR050561">
    <property type="entry name" value="PTP"/>
</dbReference>
<dbReference type="InterPro" id="IPR016130">
    <property type="entry name" value="Tyr_Pase_AS"/>
</dbReference>
<dbReference type="InterPro" id="IPR000387">
    <property type="entry name" value="Tyr_Pase_dom"/>
</dbReference>
<dbReference type="InterPro" id="IPR020422">
    <property type="entry name" value="TYR_PHOSPHATASE_DUAL_dom"/>
</dbReference>
<dbReference type="PANTHER" id="PTHR23339">
    <property type="entry name" value="TYROSINE SPECIFIC PROTEIN PHOSPHATASE AND DUAL SPECIFICITY PROTEIN PHOSPHATASE"/>
    <property type="match status" value="1"/>
</dbReference>
<dbReference type="Pfam" id="PF00782">
    <property type="entry name" value="DSPc"/>
    <property type="match status" value="1"/>
</dbReference>
<dbReference type="Pfam" id="PF14671">
    <property type="entry name" value="DSPn"/>
    <property type="match status" value="1"/>
</dbReference>
<dbReference type="SMART" id="SM00195">
    <property type="entry name" value="DSPc"/>
    <property type="match status" value="1"/>
</dbReference>
<dbReference type="SUPFAM" id="SSF52799">
    <property type="entry name" value="(Phosphotyrosine protein) phosphatases II"/>
    <property type="match status" value="2"/>
</dbReference>
<dbReference type="PROSITE" id="PS00383">
    <property type="entry name" value="TYR_PHOSPHATASE_1"/>
    <property type="match status" value="1"/>
</dbReference>
<dbReference type="PROSITE" id="PS50056">
    <property type="entry name" value="TYR_PHOSPHATASE_2"/>
    <property type="match status" value="1"/>
</dbReference>
<dbReference type="PROSITE" id="PS50054">
    <property type="entry name" value="TYR_PHOSPHATASE_DUAL"/>
    <property type="match status" value="1"/>
</dbReference>